<protein>
    <recommendedName>
        <fullName evidence="1">Macrolide export ATP-binding/permease protein MacB</fullName>
        <ecNumber evidence="1">7.6.2.-</ecNumber>
    </recommendedName>
</protein>
<evidence type="ECO:0000255" key="1">
    <source>
        <dbReference type="HAMAP-Rule" id="MF_01720"/>
    </source>
</evidence>
<feature type="chain" id="PRO_0000269973" description="Macrolide export ATP-binding/permease protein MacB">
    <location>
        <begin position="1"/>
        <end position="650"/>
    </location>
</feature>
<feature type="transmembrane region" description="Helical" evidence="1">
    <location>
        <begin position="276"/>
        <end position="296"/>
    </location>
</feature>
<feature type="transmembrane region" description="Helical" evidence="1">
    <location>
        <begin position="525"/>
        <end position="545"/>
    </location>
</feature>
<feature type="transmembrane region" description="Helical" evidence="1">
    <location>
        <begin position="580"/>
        <end position="600"/>
    </location>
</feature>
<feature type="transmembrane region" description="Helical" evidence="1">
    <location>
        <begin position="615"/>
        <end position="635"/>
    </location>
</feature>
<feature type="domain" description="ABC transporter" evidence="1">
    <location>
        <begin position="9"/>
        <end position="248"/>
    </location>
</feature>
<feature type="binding site" evidence="1">
    <location>
        <begin position="45"/>
        <end position="52"/>
    </location>
    <ligand>
        <name>ATP</name>
        <dbReference type="ChEBI" id="CHEBI:30616"/>
    </ligand>
</feature>
<comment type="function">
    <text evidence="1">Non-canonical ABC transporter that contains transmembrane domains (TMD), which form a pore in the inner membrane, and an ATP-binding domain (NBD), which is responsible for energy generation. Confers resistance against macrolides.</text>
</comment>
<comment type="subunit">
    <text evidence="1">Homodimer.</text>
</comment>
<comment type="subcellular location">
    <subcellularLocation>
        <location evidence="1">Cell inner membrane</location>
        <topology evidence="1">Multi-pass membrane protein</topology>
    </subcellularLocation>
</comment>
<comment type="similarity">
    <text evidence="1">Belongs to the ABC transporter superfamily. Macrolide exporter (TC 3.A.1.122) family.</text>
</comment>
<reference key="1">
    <citation type="journal article" date="2011" name="Stand. Genomic Sci.">
        <title>Complete genome sequence of Rhodospirillum rubrum type strain (S1).</title>
        <authorList>
            <person name="Munk A.C."/>
            <person name="Copeland A."/>
            <person name="Lucas S."/>
            <person name="Lapidus A."/>
            <person name="Del Rio T.G."/>
            <person name="Barry K."/>
            <person name="Detter J.C."/>
            <person name="Hammon N."/>
            <person name="Israni S."/>
            <person name="Pitluck S."/>
            <person name="Brettin T."/>
            <person name="Bruce D."/>
            <person name="Han C."/>
            <person name="Tapia R."/>
            <person name="Gilna P."/>
            <person name="Schmutz J."/>
            <person name="Larimer F."/>
            <person name="Land M."/>
            <person name="Kyrpides N.C."/>
            <person name="Mavromatis K."/>
            <person name="Richardson P."/>
            <person name="Rohde M."/>
            <person name="Goeker M."/>
            <person name="Klenk H.P."/>
            <person name="Zhang Y."/>
            <person name="Roberts G.P."/>
            <person name="Reslewic S."/>
            <person name="Schwartz D.C."/>
        </authorList>
    </citation>
    <scope>NUCLEOTIDE SEQUENCE [LARGE SCALE GENOMIC DNA]</scope>
    <source>
        <strain>ATCC 11170 / ATH 1.1.1 / DSM 467 / LMG 4362 / NCIMB 8255 / S1</strain>
    </source>
</reference>
<accession>Q2RPB4</accession>
<gene>
    <name evidence="1" type="primary">macB</name>
    <name type="ordered locus">Rru_A3236</name>
</gene>
<keyword id="KW-0046">Antibiotic resistance</keyword>
<keyword id="KW-0067">ATP-binding</keyword>
<keyword id="KW-0997">Cell inner membrane</keyword>
<keyword id="KW-1003">Cell membrane</keyword>
<keyword id="KW-0472">Membrane</keyword>
<keyword id="KW-0547">Nucleotide-binding</keyword>
<keyword id="KW-1185">Reference proteome</keyword>
<keyword id="KW-1278">Translocase</keyword>
<keyword id="KW-0812">Transmembrane</keyword>
<keyword id="KW-1133">Transmembrane helix</keyword>
<keyword id="KW-0813">Transport</keyword>
<organism>
    <name type="scientific">Rhodospirillum rubrum (strain ATCC 11170 / ATH 1.1.1 / DSM 467 / LMG 4362 / NCIMB 8255 / S1)</name>
    <dbReference type="NCBI Taxonomy" id="269796"/>
    <lineage>
        <taxon>Bacteria</taxon>
        <taxon>Pseudomonadati</taxon>
        <taxon>Pseudomonadota</taxon>
        <taxon>Alphaproteobacteria</taxon>
        <taxon>Rhodospirillales</taxon>
        <taxon>Rhodospirillaceae</taxon>
        <taxon>Rhodospirillum</taxon>
    </lineage>
</organism>
<dbReference type="EC" id="7.6.2.-" evidence="1"/>
<dbReference type="EMBL" id="CP000230">
    <property type="protein sequence ID" value="ABC24031.1"/>
    <property type="molecule type" value="Genomic_DNA"/>
</dbReference>
<dbReference type="RefSeq" id="WP_011390984.1">
    <property type="nucleotide sequence ID" value="NC_007643.1"/>
</dbReference>
<dbReference type="RefSeq" id="YP_428318.1">
    <property type="nucleotide sequence ID" value="NC_007643.1"/>
</dbReference>
<dbReference type="SMR" id="Q2RPB4"/>
<dbReference type="STRING" id="269796.Rru_A3236"/>
<dbReference type="EnsemblBacteria" id="ABC24031">
    <property type="protein sequence ID" value="ABC24031"/>
    <property type="gene ID" value="Rru_A3236"/>
</dbReference>
<dbReference type="KEGG" id="rru:Rru_A3236"/>
<dbReference type="PATRIC" id="fig|269796.9.peg.3351"/>
<dbReference type="eggNOG" id="COG0577">
    <property type="taxonomic scope" value="Bacteria"/>
</dbReference>
<dbReference type="eggNOG" id="COG1136">
    <property type="taxonomic scope" value="Bacteria"/>
</dbReference>
<dbReference type="HOGENOM" id="CLU_000604_78_2_5"/>
<dbReference type="PhylomeDB" id="Q2RPB4"/>
<dbReference type="Proteomes" id="UP000001929">
    <property type="component" value="Chromosome"/>
</dbReference>
<dbReference type="GO" id="GO:0005886">
    <property type="term" value="C:plasma membrane"/>
    <property type="evidence" value="ECO:0007669"/>
    <property type="project" value="UniProtKB-SubCell"/>
</dbReference>
<dbReference type="GO" id="GO:0005524">
    <property type="term" value="F:ATP binding"/>
    <property type="evidence" value="ECO:0007669"/>
    <property type="project" value="UniProtKB-KW"/>
</dbReference>
<dbReference type="GO" id="GO:0016887">
    <property type="term" value="F:ATP hydrolysis activity"/>
    <property type="evidence" value="ECO:0007669"/>
    <property type="project" value="InterPro"/>
</dbReference>
<dbReference type="GO" id="GO:0022857">
    <property type="term" value="F:transmembrane transporter activity"/>
    <property type="evidence" value="ECO:0007669"/>
    <property type="project" value="TreeGrafter"/>
</dbReference>
<dbReference type="GO" id="GO:0046677">
    <property type="term" value="P:response to antibiotic"/>
    <property type="evidence" value="ECO:0007669"/>
    <property type="project" value="UniProtKB-KW"/>
</dbReference>
<dbReference type="CDD" id="cd03255">
    <property type="entry name" value="ABC_MJ0796_LolCDE_FtsE"/>
    <property type="match status" value="1"/>
</dbReference>
<dbReference type="FunFam" id="3.40.50.300:FF:000032">
    <property type="entry name" value="Export ABC transporter ATP-binding protein"/>
    <property type="match status" value="1"/>
</dbReference>
<dbReference type="Gene3D" id="3.40.50.300">
    <property type="entry name" value="P-loop containing nucleotide triphosphate hydrolases"/>
    <property type="match status" value="1"/>
</dbReference>
<dbReference type="InterPro" id="IPR003593">
    <property type="entry name" value="AAA+_ATPase"/>
</dbReference>
<dbReference type="InterPro" id="IPR003838">
    <property type="entry name" value="ABC3_permease_C"/>
</dbReference>
<dbReference type="InterPro" id="IPR003439">
    <property type="entry name" value="ABC_transporter-like_ATP-bd"/>
</dbReference>
<dbReference type="InterPro" id="IPR017871">
    <property type="entry name" value="ABC_transporter-like_CS"/>
</dbReference>
<dbReference type="InterPro" id="IPR017911">
    <property type="entry name" value="MacB-like_ATP-bd"/>
</dbReference>
<dbReference type="InterPro" id="IPR025857">
    <property type="entry name" value="MacB_PCD"/>
</dbReference>
<dbReference type="InterPro" id="IPR050250">
    <property type="entry name" value="Macrolide_Exporter_MacB"/>
</dbReference>
<dbReference type="InterPro" id="IPR027417">
    <property type="entry name" value="P-loop_NTPase"/>
</dbReference>
<dbReference type="PANTHER" id="PTHR30572:SF4">
    <property type="entry name" value="ABC TRANSPORTER PERMEASE YTRF"/>
    <property type="match status" value="1"/>
</dbReference>
<dbReference type="PANTHER" id="PTHR30572">
    <property type="entry name" value="MEMBRANE COMPONENT OF TRANSPORTER-RELATED"/>
    <property type="match status" value="1"/>
</dbReference>
<dbReference type="Pfam" id="PF00005">
    <property type="entry name" value="ABC_tran"/>
    <property type="match status" value="1"/>
</dbReference>
<dbReference type="Pfam" id="PF02687">
    <property type="entry name" value="FtsX"/>
    <property type="match status" value="1"/>
</dbReference>
<dbReference type="Pfam" id="PF12704">
    <property type="entry name" value="MacB_PCD"/>
    <property type="match status" value="1"/>
</dbReference>
<dbReference type="SMART" id="SM00382">
    <property type="entry name" value="AAA"/>
    <property type="match status" value="1"/>
</dbReference>
<dbReference type="SUPFAM" id="SSF52540">
    <property type="entry name" value="P-loop containing nucleoside triphosphate hydrolases"/>
    <property type="match status" value="1"/>
</dbReference>
<dbReference type="PROSITE" id="PS00211">
    <property type="entry name" value="ABC_TRANSPORTER_1"/>
    <property type="match status" value="1"/>
</dbReference>
<dbReference type="PROSITE" id="PS50893">
    <property type="entry name" value="ABC_TRANSPORTER_2"/>
    <property type="match status" value="1"/>
</dbReference>
<dbReference type="PROSITE" id="PS51267">
    <property type="entry name" value="MACB"/>
    <property type="match status" value="1"/>
</dbReference>
<proteinExistence type="inferred from homology"/>
<sequence>MADTPPPLIELIDLERVFDSSEVPVRALDRVSLTIHEGEFVAIIGQSGSGKSTLMSILGCLDRPTGGLYRLGGIDVASLDPVALAGLRRDTFGFVFQRYNLLAGASAAENVEMPAVYAGQPRHQRLERAHALLDRLGMGARSGHFPNQLSGGQQQRVSIARALMNDPRVILADEPTGALDSASGRDVLALLEALHTEGRTVILITHDRDVAARAERVIALQDGRVVEDSGRPAPVGSDRPLGRPPGGAAYLGMAASFGEALKMAGRSLRANIFRTALTLLGVVIGVAAVVTMMAIGEGSKQDVLTRIQSMGTNLLLVRPGAPGIRPSGTDVSLTPTDAEAVAQLAGMAAVAPERMASGITVRREGIDYRTTINGTWPAYAAAKDWPMAWGSFFDATDLQASAPVAVLGQTVAKNLFPGEEDPVGSYFLVRNVPFLVIGVLEAKGATPFGQDQDDIVLIPLTTAFARVSGGRYLSSLTARVEDATTIDESQAAIESLLQARHGKVDFQVRNTQSLLEMVEKTQNSLTLLLGAVALISLLVGGIGVMNIMLVSVTERTREIGIRLATGARASDILLQFNTEAVAVCGVGGLAGVGLGLGAALAVAEFGLPVRFTPGPPIVAFCCAFLTGLLFGYLPARKAARLDPVVALSAE</sequence>
<name>MACB_RHORT</name>